<reference key="1">
    <citation type="submission" date="2007-12" db="EMBL/GenBank/DDBJ databases">
        <title>Complete sequence of chromosome of Francisella philomiragia subsp. philomiragia ATCC 25017.</title>
        <authorList>
            <consortium name="US DOE Joint Genome Institute"/>
            <person name="Copeland A."/>
            <person name="Lucas S."/>
            <person name="Lapidus A."/>
            <person name="Barry K."/>
            <person name="Detter J.C."/>
            <person name="Glavina del Rio T."/>
            <person name="Hammon N."/>
            <person name="Israni S."/>
            <person name="Dalin E."/>
            <person name="Tice H."/>
            <person name="Pitluck S."/>
            <person name="Chain P."/>
            <person name="Malfatti S."/>
            <person name="Shin M."/>
            <person name="Vergez L."/>
            <person name="Schmutz J."/>
            <person name="Larimer F."/>
            <person name="Land M."/>
            <person name="Hauser L."/>
            <person name="Richardson P."/>
        </authorList>
    </citation>
    <scope>NUCLEOTIDE SEQUENCE [LARGE SCALE GENOMIC DNA]</scope>
    <source>
        <strain>ATCC 25017 / CCUG 19701 / FSC 153 / O#319-036</strain>
    </source>
</reference>
<organism>
    <name type="scientific">Francisella philomiragia subsp. philomiragia (strain ATCC 25017 / CCUG 19701 / FSC 153 / O#319-036)</name>
    <dbReference type="NCBI Taxonomy" id="484022"/>
    <lineage>
        <taxon>Bacteria</taxon>
        <taxon>Pseudomonadati</taxon>
        <taxon>Pseudomonadota</taxon>
        <taxon>Gammaproteobacteria</taxon>
        <taxon>Thiotrichales</taxon>
        <taxon>Francisellaceae</taxon>
        <taxon>Francisella</taxon>
    </lineage>
</organism>
<dbReference type="EC" id="3.1.26.4" evidence="1"/>
<dbReference type="EMBL" id="CP000937">
    <property type="protein sequence ID" value="ABZ87612.1"/>
    <property type="molecule type" value="Genomic_DNA"/>
</dbReference>
<dbReference type="SMR" id="B0TYD6"/>
<dbReference type="KEGG" id="fph:Fphi_1387"/>
<dbReference type="eggNOG" id="COG0164">
    <property type="taxonomic scope" value="Bacteria"/>
</dbReference>
<dbReference type="HOGENOM" id="CLU_036532_3_2_6"/>
<dbReference type="GO" id="GO:0005737">
    <property type="term" value="C:cytoplasm"/>
    <property type="evidence" value="ECO:0007669"/>
    <property type="project" value="UniProtKB-SubCell"/>
</dbReference>
<dbReference type="GO" id="GO:0032299">
    <property type="term" value="C:ribonuclease H2 complex"/>
    <property type="evidence" value="ECO:0007669"/>
    <property type="project" value="TreeGrafter"/>
</dbReference>
<dbReference type="GO" id="GO:0030145">
    <property type="term" value="F:manganese ion binding"/>
    <property type="evidence" value="ECO:0007669"/>
    <property type="project" value="UniProtKB-UniRule"/>
</dbReference>
<dbReference type="GO" id="GO:0003723">
    <property type="term" value="F:RNA binding"/>
    <property type="evidence" value="ECO:0007669"/>
    <property type="project" value="InterPro"/>
</dbReference>
<dbReference type="GO" id="GO:0004523">
    <property type="term" value="F:RNA-DNA hybrid ribonuclease activity"/>
    <property type="evidence" value="ECO:0007669"/>
    <property type="project" value="UniProtKB-UniRule"/>
</dbReference>
<dbReference type="GO" id="GO:0043137">
    <property type="term" value="P:DNA replication, removal of RNA primer"/>
    <property type="evidence" value="ECO:0007669"/>
    <property type="project" value="TreeGrafter"/>
</dbReference>
<dbReference type="GO" id="GO:0006298">
    <property type="term" value="P:mismatch repair"/>
    <property type="evidence" value="ECO:0007669"/>
    <property type="project" value="TreeGrafter"/>
</dbReference>
<dbReference type="CDD" id="cd07182">
    <property type="entry name" value="RNase_HII_bacteria_HII_like"/>
    <property type="match status" value="1"/>
</dbReference>
<dbReference type="FunFam" id="3.30.420.10:FF:000006">
    <property type="entry name" value="Ribonuclease HII"/>
    <property type="match status" value="1"/>
</dbReference>
<dbReference type="Gene3D" id="3.30.420.10">
    <property type="entry name" value="Ribonuclease H-like superfamily/Ribonuclease H"/>
    <property type="match status" value="1"/>
</dbReference>
<dbReference type="HAMAP" id="MF_00052_B">
    <property type="entry name" value="RNase_HII_B"/>
    <property type="match status" value="1"/>
</dbReference>
<dbReference type="InterPro" id="IPR022898">
    <property type="entry name" value="RNase_HII"/>
</dbReference>
<dbReference type="InterPro" id="IPR001352">
    <property type="entry name" value="RNase_HII/HIII"/>
</dbReference>
<dbReference type="InterPro" id="IPR024567">
    <property type="entry name" value="RNase_HII/HIII_dom"/>
</dbReference>
<dbReference type="InterPro" id="IPR012337">
    <property type="entry name" value="RNaseH-like_sf"/>
</dbReference>
<dbReference type="InterPro" id="IPR036397">
    <property type="entry name" value="RNaseH_sf"/>
</dbReference>
<dbReference type="NCBIfam" id="NF000595">
    <property type="entry name" value="PRK00015.1-3"/>
    <property type="match status" value="1"/>
</dbReference>
<dbReference type="NCBIfam" id="NF000596">
    <property type="entry name" value="PRK00015.1-4"/>
    <property type="match status" value="1"/>
</dbReference>
<dbReference type="PANTHER" id="PTHR10954">
    <property type="entry name" value="RIBONUCLEASE H2 SUBUNIT A"/>
    <property type="match status" value="1"/>
</dbReference>
<dbReference type="PANTHER" id="PTHR10954:SF18">
    <property type="entry name" value="RIBONUCLEASE HII"/>
    <property type="match status" value="1"/>
</dbReference>
<dbReference type="Pfam" id="PF01351">
    <property type="entry name" value="RNase_HII"/>
    <property type="match status" value="1"/>
</dbReference>
<dbReference type="SUPFAM" id="SSF53098">
    <property type="entry name" value="Ribonuclease H-like"/>
    <property type="match status" value="1"/>
</dbReference>
<dbReference type="PROSITE" id="PS51975">
    <property type="entry name" value="RNASE_H_2"/>
    <property type="match status" value="1"/>
</dbReference>
<accession>B0TYD6</accession>
<keyword id="KW-0963">Cytoplasm</keyword>
<keyword id="KW-0255">Endonuclease</keyword>
<keyword id="KW-0378">Hydrolase</keyword>
<keyword id="KW-0464">Manganese</keyword>
<keyword id="KW-0479">Metal-binding</keyword>
<keyword id="KW-0540">Nuclease</keyword>
<gene>
    <name evidence="1" type="primary">rnhB</name>
    <name type="ordered locus">Fphi_1387</name>
</gene>
<comment type="function">
    <text evidence="1">Endonuclease that specifically degrades the RNA of RNA-DNA hybrids.</text>
</comment>
<comment type="catalytic activity">
    <reaction evidence="1">
        <text>Endonucleolytic cleavage to 5'-phosphomonoester.</text>
        <dbReference type="EC" id="3.1.26.4"/>
    </reaction>
</comment>
<comment type="cofactor">
    <cofactor evidence="1">
        <name>Mn(2+)</name>
        <dbReference type="ChEBI" id="CHEBI:29035"/>
    </cofactor>
    <cofactor evidence="1">
        <name>Mg(2+)</name>
        <dbReference type="ChEBI" id="CHEBI:18420"/>
    </cofactor>
    <text evidence="1">Manganese or magnesium. Binds 1 divalent metal ion per monomer in the absence of substrate. May bind a second metal ion after substrate binding.</text>
</comment>
<comment type="subcellular location">
    <subcellularLocation>
        <location evidence="1">Cytoplasm</location>
    </subcellularLocation>
</comment>
<comment type="similarity">
    <text evidence="1">Belongs to the RNase HII family.</text>
</comment>
<sequence>MIILGIDEAGRGPLSGPVVAAGVILDPEKTIDGLADSKKLTEKKRQSLYEVITAHAKAYTIVEVSPQQIDQLNILQATLKAMNQVADNLKGQFDKVLVDGNKLPNWDYNSEAIVKGDSKVQEISAASILAKVHRDNICLEHDRLFPQYGFAKHKGYPTKEHLENIRKYGVLNIHRKSYKPIQLLL</sequence>
<evidence type="ECO:0000255" key="1">
    <source>
        <dbReference type="HAMAP-Rule" id="MF_00052"/>
    </source>
</evidence>
<evidence type="ECO:0000255" key="2">
    <source>
        <dbReference type="PROSITE-ProRule" id="PRU01319"/>
    </source>
</evidence>
<protein>
    <recommendedName>
        <fullName evidence="1">Ribonuclease HII</fullName>
        <shortName evidence="1">RNase HII</shortName>
        <ecNumber evidence="1">3.1.26.4</ecNumber>
    </recommendedName>
</protein>
<name>RNH2_FRAP2</name>
<feature type="chain" id="PRO_1000074923" description="Ribonuclease HII">
    <location>
        <begin position="1"/>
        <end position="185"/>
    </location>
</feature>
<feature type="domain" description="RNase H type-2" evidence="2">
    <location>
        <begin position="1"/>
        <end position="185"/>
    </location>
</feature>
<feature type="binding site" evidence="1">
    <location>
        <position position="7"/>
    </location>
    <ligand>
        <name>a divalent metal cation</name>
        <dbReference type="ChEBI" id="CHEBI:60240"/>
    </ligand>
</feature>
<feature type="binding site" evidence="1">
    <location>
        <position position="8"/>
    </location>
    <ligand>
        <name>a divalent metal cation</name>
        <dbReference type="ChEBI" id="CHEBI:60240"/>
    </ligand>
</feature>
<feature type="binding site" evidence="1">
    <location>
        <position position="99"/>
    </location>
    <ligand>
        <name>a divalent metal cation</name>
        <dbReference type="ChEBI" id="CHEBI:60240"/>
    </ligand>
</feature>
<proteinExistence type="inferred from homology"/>